<sequence>MGKDTIADIITYIRNADMNKKGMVQIPFTNITENIVKILLREGFVENVRKHRENDKYFLVLTLRYRRNRKGSYKSFLNLKRISTPGLRIYSNYQRIPRILGGMGIVILSTSRGIMTDREARLERIGGEVLCYIW</sequence>
<geneLocation type="chloroplast"/>
<dbReference type="EMBL" id="DQ317523">
    <property type="protein sequence ID" value="ABC25158.1"/>
    <property type="molecule type" value="Genomic_DNA"/>
</dbReference>
<dbReference type="EMBL" id="AF347627">
    <property type="protein sequence ID" value="AAK38853.1"/>
    <property type="molecule type" value="Genomic_DNA"/>
</dbReference>
<dbReference type="RefSeq" id="NP_001238385.1">
    <property type="nucleotide sequence ID" value="NM_001251456.1"/>
</dbReference>
<dbReference type="RefSeq" id="YP_538800.1">
    <property type="nucleotide sequence ID" value="NC_007942.1"/>
</dbReference>
<dbReference type="SMR" id="Q2PMQ0"/>
<dbReference type="FunCoup" id="Q2PMQ0">
    <property type="interactions" value="257"/>
</dbReference>
<dbReference type="STRING" id="3847.Q2PMQ0"/>
<dbReference type="GeneID" id="3989332"/>
<dbReference type="KEGG" id="gmx:3989332"/>
<dbReference type="InParanoid" id="Q2PMQ0"/>
<dbReference type="Proteomes" id="UP000008827">
    <property type="component" value="Chloroplast"/>
</dbReference>
<dbReference type="GO" id="GO:0009507">
    <property type="term" value="C:chloroplast"/>
    <property type="evidence" value="ECO:0007669"/>
    <property type="project" value="UniProtKB-SubCell"/>
</dbReference>
<dbReference type="GO" id="GO:1990904">
    <property type="term" value="C:ribonucleoprotein complex"/>
    <property type="evidence" value="ECO:0007669"/>
    <property type="project" value="UniProtKB-KW"/>
</dbReference>
<dbReference type="GO" id="GO:0005840">
    <property type="term" value="C:ribosome"/>
    <property type="evidence" value="ECO:0007669"/>
    <property type="project" value="UniProtKB-KW"/>
</dbReference>
<dbReference type="GO" id="GO:0019843">
    <property type="term" value="F:rRNA binding"/>
    <property type="evidence" value="ECO:0007669"/>
    <property type="project" value="UniProtKB-UniRule"/>
</dbReference>
<dbReference type="GO" id="GO:0003735">
    <property type="term" value="F:structural constituent of ribosome"/>
    <property type="evidence" value="ECO:0000318"/>
    <property type="project" value="GO_Central"/>
</dbReference>
<dbReference type="GO" id="GO:0006412">
    <property type="term" value="P:translation"/>
    <property type="evidence" value="ECO:0007669"/>
    <property type="project" value="UniProtKB-UniRule"/>
</dbReference>
<dbReference type="FunFam" id="3.30.1490.10:FF:000001">
    <property type="entry name" value="30S ribosomal protein S8"/>
    <property type="match status" value="1"/>
</dbReference>
<dbReference type="FunFam" id="3.30.1370.30:FF:000004">
    <property type="entry name" value="30S ribosomal protein S8, chloroplastic"/>
    <property type="match status" value="1"/>
</dbReference>
<dbReference type="Gene3D" id="3.30.1370.30">
    <property type="match status" value="1"/>
</dbReference>
<dbReference type="Gene3D" id="3.30.1490.10">
    <property type="match status" value="1"/>
</dbReference>
<dbReference type="HAMAP" id="MF_01302_B">
    <property type="entry name" value="Ribosomal_uS8_B"/>
    <property type="match status" value="1"/>
</dbReference>
<dbReference type="InterPro" id="IPR000630">
    <property type="entry name" value="Ribosomal_uS8"/>
</dbReference>
<dbReference type="InterPro" id="IPR047863">
    <property type="entry name" value="Ribosomal_uS8_CS"/>
</dbReference>
<dbReference type="InterPro" id="IPR035987">
    <property type="entry name" value="Ribosomal_uS8_sf"/>
</dbReference>
<dbReference type="NCBIfam" id="NF001109">
    <property type="entry name" value="PRK00136.1"/>
    <property type="match status" value="1"/>
</dbReference>
<dbReference type="PANTHER" id="PTHR11758">
    <property type="entry name" value="40S RIBOSOMAL PROTEIN S15A"/>
    <property type="match status" value="1"/>
</dbReference>
<dbReference type="Pfam" id="PF00410">
    <property type="entry name" value="Ribosomal_S8"/>
    <property type="match status" value="1"/>
</dbReference>
<dbReference type="SUPFAM" id="SSF56047">
    <property type="entry name" value="Ribosomal protein S8"/>
    <property type="match status" value="1"/>
</dbReference>
<dbReference type="PROSITE" id="PS00053">
    <property type="entry name" value="RIBOSOMAL_S8"/>
    <property type="match status" value="1"/>
</dbReference>
<gene>
    <name type="primary">rps8</name>
</gene>
<name>RR8_SOYBN</name>
<evidence type="ECO:0000250" key="1"/>
<evidence type="ECO:0000305" key="2"/>
<accession>Q2PMQ0</accession>
<accession>Q95GN0</accession>
<keyword id="KW-0150">Chloroplast</keyword>
<keyword id="KW-0934">Plastid</keyword>
<keyword id="KW-1185">Reference proteome</keyword>
<keyword id="KW-0687">Ribonucleoprotein</keyword>
<keyword id="KW-0689">Ribosomal protein</keyword>
<keyword id="KW-0694">RNA-binding</keyword>
<keyword id="KW-0699">rRNA-binding</keyword>
<comment type="function">
    <text evidence="1">One of the primary rRNA binding proteins, it binds directly to 16S rRNA central domain where it helps coordinate assembly of the platform of the 30S subunit.</text>
</comment>
<comment type="subunit">
    <text evidence="1">Part of the 30S ribosomal subunit.</text>
</comment>
<comment type="subcellular location">
    <subcellularLocation>
        <location>Plastid</location>
        <location>Chloroplast</location>
    </subcellularLocation>
</comment>
<comment type="similarity">
    <text evidence="2">Belongs to the universal ribosomal protein uS8 family.</text>
</comment>
<protein>
    <recommendedName>
        <fullName evidence="2">Small ribosomal subunit protein uS8c</fullName>
    </recommendedName>
    <alternativeName>
        <fullName>30S ribosomal protein S8, chloroplastic</fullName>
    </alternativeName>
</protein>
<organism>
    <name type="scientific">Glycine max</name>
    <name type="common">Soybean</name>
    <name type="synonym">Glycine hispida</name>
    <dbReference type="NCBI Taxonomy" id="3847"/>
    <lineage>
        <taxon>Eukaryota</taxon>
        <taxon>Viridiplantae</taxon>
        <taxon>Streptophyta</taxon>
        <taxon>Embryophyta</taxon>
        <taxon>Tracheophyta</taxon>
        <taxon>Spermatophyta</taxon>
        <taxon>Magnoliopsida</taxon>
        <taxon>eudicotyledons</taxon>
        <taxon>Gunneridae</taxon>
        <taxon>Pentapetalae</taxon>
        <taxon>rosids</taxon>
        <taxon>fabids</taxon>
        <taxon>Fabales</taxon>
        <taxon>Fabaceae</taxon>
        <taxon>Papilionoideae</taxon>
        <taxon>50 kb inversion clade</taxon>
        <taxon>NPAAA clade</taxon>
        <taxon>indigoferoid/millettioid clade</taxon>
        <taxon>Phaseoleae</taxon>
        <taxon>Glycine</taxon>
        <taxon>Glycine subgen. Soja</taxon>
    </lineage>
</organism>
<reference key="1">
    <citation type="journal article" date="2005" name="Plant Mol. Biol.">
        <title>Complete chloroplast genome sequence of Glycine max and comparative analyses with other legume genomes.</title>
        <authorList>
            <person name="Saski C."/>
            <person name="Lee S.-B."/>
            <person name="Daniell H."/>
            <person name="Wood T.C."/>
            <person name="Tomkins J."/>
            <person name="Kim H.-G."/>
            <person name="Jansen R.K."/>
        </authorList>
    </citation>
    <scope>NUCLEOTIDE SEQUENCE [LARGE SCALE GENOMIC DNA]</scope>
    <source>
        <strain>cv. PI 437654</strain>
    </source>
</reference>
<reference key="2">
    <citation type="journal article" date="2001" name="Plant Cell">
        <title>Many parallel losses of infA from chloroplast DNA during angiosperm evolution with multiple independent transfers to the nucleus.</title>
        <authorList>
            <person name="Millen R.S."/>
            <person name="Olmstead R.G."/>
            <person name="Adams K.L."/>
            <person name="Palmer J.D."/>
            <person name="Lao N.T."/>
            <person name="Heggie L."/>
            <person name="Kavanagh T.A."/>
            <person name="Hibberd J.M."/>
            <person name="Gray J.C."/>
            <person name="Morden C.W."/>
            <person name="Calie P.J."/>
            <person name="Jermiin L.S."/>
            <person name="Wolfe K.H."/>
        </authorList>
    </citation>
    <scope>NUCLEOTIDE SEQUENCE [GENOMIC DNA] OF 81-134</scope>
</reference>
<proteinExistence type="inferred from homology"/>
<feature type="chain" id="PRO_0000225914" description="Small ribosomal subunit protein uS8c">
    <location>
        <begin position="1"/>
        <end position="134"/>
    </location>
</feature>